<comment type="function">
    <text evidence="1 2 3 5 6">Component of the Clr4 methyltransferase complex (ClrC) which contributes to the establishment of heterochromatin by specifically methylating histone H3 to form H3K9me (PubMed:16024659, PubMed:16040243, PubMed:16157682). ClrC preferentially ubiquitylates H3K14 and ClrC-mediated H3 ubiquitination promotes clr4 methyltransferase activity for the methylation of H3K9 (PubMed:31468675). H3K9me represents a specific tag for epigenetic transcriptional repression by recruiting swi6/HP1 to methylated histones which leads to transcriptional silencing within centromeric heterochromatin, telomeric regions and at the silent mating-type loci (PubMed:16024659, PubMed:16040243, PubMed:16157682, PubMed:18345014). Has a role in both mitotic and meiotic chromosome segregation (PubMed:16040243).</text>
</comment>
<comment type="subunit">
    <text evidence="1 2 3">Component of the Clr4 methyltransferase complex (ClrC) composed of at least clr4, rik1, pcu4, rbx1, raf1 and raf2. The cullin pcu4, rik1, raf1, raf2 and the ring-box protein rbx1 are components of an E3 ubiquitin ligase, whose activity is essential for heterochromatin assembly (PubMed:16024659, PubMed:16040243, PubMed:16157682). Interacts with nup189 (PubMed:16157682).</text>
</comment>
<comment type="interaction">
    <interactant intactId="EBI-904913">
        <id>O74910</id>
    </interactant>
    <interactant intactId="EBI-2105919">
        <id>Q9HDV4</id>
        <label>lid2</label>
    </interactant>
    <organismsDiffer>false</organismsDiffer>
    <experiments>2</experiments>
</comment>
<comment type="interaction">
    <interactant intactId="EBI-904913">
        <id>O74910</id>
    </interactant>
    <interactant intactId="EBI-1111936">
        <id>Q10426</id>
        <label>rik1</label>
    </interactant>
    <organismsDiffer>false</organismsDiffer>
    <experiments>3</experiments>
</comment>
<comment type="interaction">
    <interactant intactId="EBI-904913">
        <id>O74910</id>
    </interactant>
    <interactant intactId="EBI-2651917">
        <id>O94276</id>
        <label>SPBP8B7.28c</label>
    </interactant>
    <organismsDiffer>false</organismsDiffer>
    <experiments>2</experiments>
</comment>
<comment type="subcellular location">
    <subcellularLocation>
        <location evidence="4">Cytoplasm</location>
    </subcellularLocation>
    <subcellularLocation>
        <location evidence="4 5">Nucleus</location>
    </subcellularLocation>
    <subcellularLocation>
        <location evidence="5">Chromosome</location>
    </subcellularLocation>
</comment>
<organism>
    <name type="scientific">Schizosaccharomyces pombe (strain 972 / ATCC 24843)</name>
    <name type="common">Fission yeast</name>
    <dbReference type="NCBI Taxonomy" id="284812"/>
    <lineage>
        <taxon>Eukaryota</taxon>
        <taxon>Fungi</taxon>
        <taxon>Dikarya</taxon>
        <taxon>Ascomycota</taxon>
        <taxon>Taphrinomycotina</taxon>
        <taxon>Schizosaccharomycetes</taxon>
        <taxon>Schizosaccharomycetales</taxon>
        <taxon>Schizosaccharomycetaceae</taxon>
        <taxon>Schizosaccharomyces</taxon>
    </lineage>
</organism>
<gene>
    <name type="primary">raf1</name>
    <name type="synonym">clr8</name>
    <name type="synonym">cmc1</name>
    <name type="synonym">dos1</name>
    <name type="ORF">SPCC613.12c</name>
</gene>
<dbReference type="EMBL" id="CU329672">
    <property type="protein sequence ID" value="CAA21064.1"/>
    <property type="molecule type" value="Genomic_DNA"/>
</dbReference>
<dbReference type="PIR" id="T41478">
    <property type="entry name" value="T41478"/>
</dbReference>
<dbReference type="RefSeq" id="NP_587700.1">
    <property type="nucleotide sequence ID" value="NM_001022695.2"/>
</dbReference>
<dbReference type="PDB" id="4O9D">
    <property type="method" value="X-ray"/>
    <property type="resolution" value="2.00 A"/>
    <property type="chains" value="A/B=213-638"/>
</dbReference>
<dbReference type="PDBsum" id="4O9D"/>
<dbReference type="SMR" id="O74910"/>
<dbReference type="BioGRID" id="275429">
    <property type="interactions" value="258"/>
</dbReference>
<dbReference type="ComplexPortal" id="CPX-9241">
    <property type="entry name" value="CLR4 E3 ubiquitin ligase/methyltransferase complex"/>
</dbReference>
<dbReference type="DIP" id="DIP-37644N"/>
<dbReference type="FunCoup" id="O74910">
    <property type="interactions" value="18"/>
</dbReference>
<dbReference type="IntAct" id="O74910">
    <property type="interactions" value="7"/>
</dbReference>
<dbReference type="STRING" id="284812.O74910"/>
<dbReference type="iPTMnet" id="O74910"/>
<dbReference type="PaxDb" id="4896-SPCC613.12c.1"/>
<dbReference type="EnsemblFungi" id="SPCC613.12c.1">
    <property type="protein sequence ID" value="SPCC613.12c.1:pep"/>
    <property type="gene ID" value="SPCC613.12c"/>
</dbReference>
<dbReference type="GeneID" id="2538848"/>
<dbReference type="KEGG" id="spo:2538848"/>
<dbReference type="PomBase" id="SPCC613.12c">
    <property type="gene designation" value="raf1"/>
</dbReference>
<dbReference type="VEuPathDB" id="FungiDB:SPCC613.12c"/>
<dbReference type="eggNOG" id="ENOG502RZG9">
    <property type="taxonomic scope" value="Eukaryota"/>
</dbReference>
<dbReference type="HOGENOM" id="CLU_429036_0_0_1"/>
<dbReference type="InParanoid" id="O74910"/>
<dbReference type="OMA" id="TKMIHFD"/>
<dbReference type="PhylomeDB" id="O74910"/>
<dbReference type="EvolutionaryTrace" id="O74910"/>
<dbReference type="PRO" id="PR:O74910"/>
<dbReference type="Proteomes" id="UP000002485">
    <property type="component" value="Chromosome III"/>
</dbReference>
<dbReference type="GO" id="GO:0000785">
    <property type="term" value="C:chromatin"/>
    <property type="evidence" value="ECO:0000314"/>
    <property type="project" value="PomBase"/>
</dbReference>
<dbReference type="GO" id="GO:0043494">
    <property type="term" value="C:CLRC complex"/>
    <property type="evidence" value="ECO:0000314"/>
    <property type="project" value="PomBase"/>
</dbReference>
<dbReference type="GO" id="GO:0005829">
    <property type="term" value="C:cytosol"/>
    <property type="evidence" value="ECO:0007005"/>
    <property type="project" value="PomBase"/>
</dbReference>
<dbReference type="GO" id="GO:0031934">
    <property type="term" value="C:mating-type region heterochromatin"/>
    <property type="evidence" value="ECO:0000314"/>
    <property type="project" value="PomBase"/>
</dbReference>
<dbReference type="GO" id="GO:0005634">
    <property type="term" value="C:nucleus"/>
    <property type="evidence" value="ECO:0000314"/>
    <property type="project" value="PomBase"/>
</dbReference>
<dbReference type="GO" id="GO:0005721">
    <property type="term" value="C:pericentric heterochromatin"/>
    <property type="evidence" value="ECO:0000314"/>
    <property type="project" value="PomBase"/>
</dbReference>
<dbReference type="GO" id="GO:0140720">
    <property type="term" value="C:subtelomeric heterochromatin"/>
    <property type="evidence" value="ECO:0000314"/>
    <property type="project" value="PomBase"/>
</dbReference>
<dbReference type="GO" id="GO:0034080">
    <property type="term" value="P:CENP-A containing chromatin assembly"/>
    <property type="evidence" value="ECO:0000315"/>
    <property type="project" value="PomBase"/>
</dbReference>
<dbReference type="GO" id="GO:0045141">
    <property type="term" value="P:meiotic telomere clustering"/>
    <property type="evidence" value="ECO:0000315"/>
    <property type="project" value="PomBase"/>
</dbReference>
<dbReference type="GO" id="GO:0030466">
    <property type="term" value="P:silent mating-type cassette heterochromatin formation"/>
    <property type="evidence" value="ECO:0000315"/>
    <property type="project" value="PomBase"/>
</dbReference>
<dbReference type="GO" id="GO:0140727">
    <property type="term" value="P:siRNA-mediated pericentric heterochromatin formation"/>
    <property type="evidence" value="ECO:0000315"/>
    <property type="project" value="PomBase"/>
</dbReference>
<dbReference type="GO" id="GO:0031509">
    <property type="term" value="P:subtelomeric heterochromatin formation"/>
    <property type="evidence" value="ECO:0000315"/>
    <property type="project" value="PomBase"/>
</dbReference>
<dbReference type="Gene3D" id="2.130.10.10">
    <property type="entry name" value="YVTN repeat-like/Quinoprotein amine dehydrogenase"/>
    <property type="match status" value="1"/>
</dbReference>
<dbReference type="InterPro" id="IPR020472">
    <property type="entry name" value="G-protein_beta_WD-40_rep"/>
</dbReference>
<dbReference type="InterPro" id="IPR015943">
    <property type="entry name" value="WD40/YVTN_repeat-like_dom_sf"/>
</dbReference>
<dbReference type="InterPro" id="IPR019775">
    <property type="entry name" value="WD40_repeat_CS"/>
</dbReference>
<dbReference type="InterPro" id="IPR036322">
    <property type="entry name" value="WD40_repeat_dom_sf"/>
</dbReference>
<dbReference type="InterPro" id="IPR001680">
    <property type="entry name" value="WD40_rpt"/>
</dbReference>
<dbReference type="InterPro" id="IPR050505">
    <property type="entry name" value="WDR55_POC1"/>
</dbReference>
<dbReference type="PANTHER" id="PTHR44019:SF8">
    <property type="entry name" value="POC1 CENTRIOLAR PROTEIN HOMOLOG"/>
    <property type="match status" value="1"/>
</dbReference>
<dbReference type="PANTHER" id="PTHR44019">
    <property type="entry name" value="WD REPEAT-CONTAINING PROTEIN 55"/>
    <property type="match status" value="1"/>
</dbReference>
<dbReference type="Pfam" id="PF00400">
    <property type="entry name" value="WD40"/>
    <property type="match status" value="2"/>
</dbReference>
<dbReference type="PRINTS" id="PR00320">
    <property type="entry name" value="GPROTEINBRPT"/>
</dbReference>
<dbReference type="SMART" id="SM00320">
    <property type="entry name" value="WD40"/>
    <property type="match status" value="5"/>
</dbReference>
<dbReference type="SUPFAM" id="SSF50978">
    <property type="entry name" value="WD40 repeat-like"/>
    <property type="match status" value="1"/>
</dbReference>
<dbReference type="PROSITE" id="PS00678">
    <property type="entry name" value="WD_REPEATS_1"/>
    <property type="match status" value="2"/>
</dbReference>
<dbReference type="PROSITE" id="PS50082">
    <property type="entry name" value="WD_REPEATS_2"/>
    <property type="match status" value="2"/>
</dbReference>
<dbReference type="PROSITE" id="PS50294">
    <property type="entry name" value="WD_REPEATS_REGION"/>
    <property type="match status" value="1"/>
</dbReference>
<sequence>MTNSSPRVKRRTDTQYLHSVSSKLPKVDFDTNNEEFFEEEFEIYDPFYRAELPCPKPSLSISKHSIAKVPSNVNKRLELQLLLTSGTFLPNSRPYLSERVRKHTHLLSNSITGDDKPSLIHVDFTPEECFILQEAKLKFGPVNSVQFNDAYSTHISPKLPGRAYEDCQKFEIDNPSLSPVDKHGAIILRTYKKNKKLLPDYLKSFYNAGSSYFQREQVHQLMDGESVFFLKPWKHFNETSGDTVCVAYNPLCEKFALGSTAQDGAYNRLGNLWIGDFHSETIQSLESHYKLNQVGEKEYSTISDLCFSKGNLFLYTGAFDNAVKVWDMEGNLCGIFNAPTDYIHKLALSDDDLLAVACKNGYGYLLSTDNSTGEILTSANLIYPEALEKGYSASLIEFSNFLGRSSDKVIIGYDSFHTSNNRGCLALFDASTASFVQKFNTADEAFTSLYMHPSQVGFVASSNTLSNGRVYYLDTRMYKVCLNFTTTQKDINHATISNSGILVTSSGTDNQTFVWDSRKPDKPLSLLKHGKTKMIHFDGANEEEVDAGINMAQWQPKGNLFVTGGSDGIVKVWDLRLNNPFIQNFTEMNSAITYGGFSEDASKLTVCCVGGDVNMYSLGNDNGNKFGEFRIIENRLLT</sequence>
<keyword id="KW-0002">3D-structure</keyword>
<keyword id="KW-0156">Chromatin regulator</keyword>
<keyword id="KW-0158">Chromosome</keyword>
<keyword id="KW-0963">Cytoplasm</keyword>
<keyword id="KW-0903">Direct protein sequencing</keyword>
<keyword id="KW-0539">Nucleus</keyword>
<keyword id="KW-1185">Reference proteome</keyword>
<keyword id="KW-0677">Repeat</keyword>
<keyword id="KW-0804">Transcription</keyword>
<keyword id="KW-0805">Transcription regulation</keyword>
<keyword id="KW-0853">WD repeat</keyword>
<protein>
    <recommendedName>
        <fullName>Rik1-associated factor 1</fullName>
    </recommendedName>
    <alternativeName>
        <fullName>Cryptic loci regulator 8</fullName>
    </alternativeName>
    <alternativeName>
        <fullName>De-localization of swi6 protein 1</fullName>
    </alternativeName>
</protein>
<proteinExistence type="evidence at protein level"/>
<reference key="1">
    <citation type="journal article" date="2002" name="Nature">
        <title>The genome sequence of Schizosaccharomyces pombe.</title>
        <authorList>
            <person name="Wood V."/>
            <person name="Gwilliam R."/>
            <person name="Rajandream M.A."/>
            <person name="Lyne M.H."/>
            <person name="Lyne R."/>
            <person name="Stewart A."/>
            <person name="Sgouros J.G."/>
            <person name="Peat N."/>
            <person name="Hayles J."/>
            <person name="Baker S.G."/>
            <person name="Basham D."/>
            <person name="Bowman S."/>
            <person name="Brooks K."/>
            <person name="Brown D."/>
            <person name="Brown S."/>
            <person name="Chillingworth T."/>
            <person name="Churcher C.M."/>
            <person name="Collins M."/>
            <person name="Connor R."/>
            <person name="Cronin A."/>
            <person name="Davis P."/>
            <person name="Feltwell T."/>
            <person name="Fraser A."/>
            <person name="Gentles S."/>
            <person name="Goble A."/>
            <person name="Hamlin N."/>
            <person name="Harris D.E."/>
            <person name="Hidalgo J."/>
            <person name="Hodgson G."/>
            <person name="Holroyd S."/>
            <person name="Hornsby T."/>
            <person name="Howarth S."/>
            <person name="Huckle E.J."/>
            <person name="Hunt S."/>
            <person name="Jagels K."/>
            <person name="James K.D."/>
            <person name="Jones L."/>
            <person name="Jones M."/>
            <person name="Leather S."/>
            <person name="McDonald S."/>
            <person name="McLean J."/>
            <person name="Mooney P."/>
            <person name="Moule S."/>
            <person name="Mungall K.L."/>
            <person name="Murphy L.D."/>
            <person name="Niblett D."/>
            <person name="Odell C."/>
            <person name="Oliver K."/>
            <person name="O'Neil S."/>
            <person name="Pearson D."/>
            <person name="Quail M.A."/>
            <person name="Rabbinowitsch E."/>
            <person name="Rutherford K.M."/>
            <person name="Rutter S."/>
            <person name="Saunders D."/>
            <person name="Seeger K."/>
            <person name="Sharp S."/>
            <person name="Skelton J."/>
            <person name="Simmonds M.N."/>
            <person name="Squares R."/>
            <person name="Squares S."/>
            <person name="Stevens K."/>
            <person name="Taylor K."/>
            <person name="Taylor R.G."/>
            <person name="Tivey A."/>
            <person name="Walsh S.V."/>
            <person name="Warren T."/>
            <person name="Whitehead S."/>
            <person name="Woodward J.R."/>
            <person name="Volckaert G."/>
            <person name="Aert R."/>
            <person name="Robben J."/>
            <person name="Grymonprez B."/>
            <person name="Weltjens I."/>
            <person name="Vanstreels E."/>
            <person name="Rieger M."/>
            <person name="Schaefer M."/>
            <person name="Mueller-Auer S."/>
            <person name="Gabel C."/>
            <person name="Fuchs M."/>
            <person name="Duesterhoeft A."/>
            <person name="Fritzc C."/>
            <person name="Holzer E."/>
            <person name="Moestl D."/>
            <person name="Hilbert H."/>
            <person name="Borzym K."/>
            <person name="Langer I."/>
            <person name="Beck A."/>
            <person name="Lehrach H."/>
            <person name="Reinhardt R."/>
            <person name="Pohl T.M."/>
            <person name="Eger P."/>
            <person name="Zimmermann W."/>
            <person name="Wedler H."/>
            <person name="Wambutt R."/>
            <person name="Purnelle B."/>
            <person name="Goffeau A."/>
            <person name="Cadieu E."/>
            <person name="Dreano S."/>
            <person name="Gloux S."/>
            <person name="Lelaure V."/>
            <person name="Mottier S."/>
            <person name="Galibert F."/>
            <person name="Aves S.J."/>
            <person name="Xiang Z."/>
            <person name="Hunt C."/>
            <person name="Moore K."/>
            <person name="Hurst S.M."/>
            <person name="Lucas M."/>
            <person name="Rochet M."/>
            <person name="Gaillardin C."/>
            <person name="Tallada V.A."/>
            <person name="Garzon A."/>
            <person name="Thode G."/>
            <person name="Daga R.R."/>
            <person name="Cruzado L."/>
            <person name="Jimenez J."/>
            <person name="Sanchez M."/>
            <person name="del Rey F."/>
            <person name="Benito J."/>
            <person name="Dominguez A."/>
            <person name="Revuelta J.L."/>
            <person name="Moreno S."/>
            <person name="Armstrong J."/>
            <person name="Forsburg S.L."/>
            <person name="Cerutti L."/>
            <person name="Lowe T."/>
            <person name="McCombie W.R."/>
            <person name="Paulsen I."/>
            <person name="Potashkin J."/>
            <person name="Shpakovski G.V."/>
            <person name="Ussery D."/>
            <person name="Barrell B.G."/>
            <person name="Nurse P."/>
        </authorList>
    </citation>
    <scope>NUCLEOTIDE SEQUENCE [LARGE SCALE GENOMIC DNA]</scope>
    <source>
        <strain>972 / ATCC 24843</strain>
    </source>
</reference>
<reference key="2">
    <citation type="journal article" date="2005" name="Genes Dev.">
        <title>A Rik1-associated, cullin-dependent E3 ubiquitin ligase is essential for heterochromatin formation.</title>
        <authorList>
            <person name="Horn P.J."/>
            <person name="Bastie J.-N."/>
            <person name="Peterson C.L."/>
        </authorList>
    </citation>
    <scope>PARTIAL PROTEIN SEQUENCE</scope>
    <scope>FUNCTION</scope>
    <scope>IDENTIFICATION IN THE RIK1-ASSOCIATED E3 UBIQUITIN LIGASE COMPLEX</scope>
    <scope>SUBCELLULAR LOCATION</scope>
</reference>
<reference key="3">
    <citation type="journal article" date="2005" name="Curr. Biol.">
        <title>Two novel proteins, dos1 and dos2, interact with rik1 to regulate heterochromatic RNA interference and histone modification.</title>
        <authorList>
            <person name="Li F."/>
            <person name="Goto D.B."/>
            <person name="Zaratiegui M."/>
            <person name="Tang X."/>
            <person name="Martienssen R."/>
            <person name="Cande W.Z."/>
        </authorList>
    </citation>
    <scope>FUNCTION</scope>
    <scope>INTERACTION WITH RIK1</scope>
    <scope>SUBCELLULAR LOCATION</scope>
</reference>
<reference key="4">
    <citation type="journal article" date="2005" name="Genetics">
        <title>The Clr7 and Clr8 directionality factors and the Pcu4 cullin mediate heterochromatin formation in the fission yeast Schizosaccharomyces pombe.</title>
        <authorList>
            <person name="Thon G."/>
            <person name="Hansen K.R."/>
            <person name="Altes S.P."/>
            <person name="Sidhu D."/>
            <person name="Singh G."/>
            <person name="Verhein-Hansen J."/>
            <person name="Bonaduce M.J."/>
            <person name="Klar A.J."/>
        </authorList>
    </citation>
    <scope>FUNCTION</scope>
    <scope>INTERACTION WITH NUP189</scope>
</reference>
<reference key="5">
    <citation type="journal article" date="2006" name="Nat. Biotechnol.">
        <title>ORFeome cloning and global analysis of protein localization in the fission yeast Schizosaccharomyces pombe.</title>
        <authorList>
            <person name="Matsuyama A."/>
            <person name="Arai R."/>
            <person name="Yashiroda Y."/>
            <person name="Shirai A."/>
            <person name="Kamata A."/>
            <person name="Sekido S."/>
            <person name="Kobayashi Y."/>
            <person name="Hashimoto A."/>
            <person name="Hamamoto M."/>
            <person name="Hiraoka Y."/>
            <person name="Horinouchi S."/>
            <person name="Yoshida M."/>
        </authorList>
    </citation>
    <scope>SUBCELLULAR LOCATION [LARGE SCALE ANALYSIS]</scope>
</reference>
<reference key="6">
    <citation type="journal article" date="2008" name="Nat. Struct. Mol. Biol.">
        <title>Roles of the Clr4 methyltransferase complex in nucleation, spreading and maintenance of heterochromatin.</title>
        <authorList>
            <person name="Zhang K."/>
            <person name="Mosch K."/>
            <person name="Fischle W."/>
            <person name="Grewal S.I."/>
        </authorList>
    </citation>
    <scope>FUNCTION</scope>
    <scope>SUBCELLULAR LOCATION</scope>
</reference>
<reference key="7">
    <citation type="journal article" date="2019" name="EMBO Rep.">
        <title>H3K14 ubiquitylation promotes H3K9 methylation for heterochromatin assembly.</title>
        <authorList>
            <person name="Oya E."/>
            <person name="Nakagawa R."/>
            <person name="Yoshimura Y."/>
            <person name="Tanaka M."/>
            <person name="Nishibuchi G."/>
            <person name="Machida S."/>
            <person name="Shirai A."/>
            <person name="Ekwall K."/>
            <person name="Kurumizaka H."/>
            <person name="Tagami H."/>
            <person name="Nakayama J.I."/>
        </authorList>
    </citation>
    <scope>FUNCTION</scope>
</reference>
<reference key="8">
    <citation type="journal article" date="2014" name="Proc. Natl. Acad. Sci. U.S.A.">
        <title>CRL4-like Clr4 complex in Schizosaccharomyces pombe depends on an exposed surface of Dos1 for heterochromatin silencing.</title>
        <authorList>
            <person name="Kuscu C."/>
            <person name="Zaratiegui M."/>
            <person name="Kim H.S."/>
            <person name="Wah D.A."/>
            <person name="Martienssen R.A."/>
            <person name="Schalch T."/>
            <person name="Joshua-Tor L."/>
        </authorList>
    </citation>
    <scope>X-RAY CRYSTALLOGRAPHY (2.00 ANGSTROMS) OF 213-638</scope>
</reference>
<feature type="chain" id="PRO_0000051497" description="Rik1-associated factor 1">
    <location>
        <begin position="1"/>
        <end position="638"/>
    </location>
</feature>
<feature type="repeat" description="WD 1">
    <location>
        <begin position="297"/>
        <end position="336"/>
    </location>
</feature>
<feature type="repeat" description="WD 2">
    <location>
        <begin position="486"/>
        <end position="525"/>
    </location>
</feature>
<feature type="repeat" description="WD 3">
    <location>
        <begin position="544"/>
        <end position="583"/>
    </location>
</feature>
<feature type="repeat" description="WD 4">
    <location>
        <begin position="587"/>
        <end position="626"/>
    </location>
</feature>
<feature type="helix" evidence="7">
    <location>
        <begin position="226"/>
        <end position="228"/>
    </location>
</feature>
<feature type="strand" evidence="7">
    <location>
        <begin position="231"/>
        <end position="236"/>
    </location>
</feature>
<feature type="strand" evidence="7">
    <location>
        <begin position="243"/>
        <end position="248"/>
    </location>
</feature>
<feature type="strand" evidence="7">
    <location>
        <begin position="252"/>
        <end position="259"/>
    </location>
</feature>
<feature type="strand" evidence="7">
    <location>
        <begin position="271"/>
        <end position="276"/>
    </location>
</feature>
<feature type="turn" evidence="7">
    <location>
        <begin position="277"/>
        <end position="280"/>
    </location>
</feature>
<feature type="strand" evidence="7">
    <location>
        <begin position="281"/>
        <end position="284"/>
    </location>
</feature>
<feature type="strand" evidence="7">
    <location>
        <begin position="289"/>
        <end position="291"/>
    </location>
</feature>
<feature type="strand" evidence="7">
    <location>
        <begin position="297"/>
        <end position="299"/>
    </location>
</feature>
<feature type="strand" evidence="7">
    <location>
        <begin position="302"/>
        <end position="307"/>
    </location>
</feature>
<feature type="strand" evidence="7">
    <location>
        <begin position="311"/>
        <end position="318"/>
    </location>
</feature>
<feature type="strand" evidence="7">
    <location>
        <begin position="323"/>
        <end position="327"/>
    </location>
</feature>
<feature type="strand" evidence="7">
    <location>
        <begin position="332"/>
        <end position="336"/>
    </location>
</feature>
<feature type="strand" evidence="7">
    <location>
        <begin position="343"/>
        <end position="348"/>
    </location>
</feature>
<feature type="strand" evidence="7">
    <location>
        <begin position="354"/>
        <end position="358"/>
    </location>
</feature>
<feature type="strand" evidence="7">
    <location>
        <begin position="363"/>
        <end position="368"/>
    </location>
</feature>
<feature type="turn" evidence="7">
    <location>
        <begin position="370"/>
        <end position="372"/>
    </location>
</feature>
<feature type="strand" evidence="7">
    <location>
        <begin position="375"/>
        <end position="381"/>
    </location>
</feature>
<feature type="helix" evidence="7">
    <location>
        <begin position="384"/>
        <end position="388"/>
    </location>
</feature>
<feature type="strand" evidence="7">
    <location>
        <begin position="392"/>
        <end position="399"/>
    </location>
</feature>
<feature type="turn" evidence="7">
    <location>
        <begin position="401"/>
        <end position="404"/>
    </location>
</feature>
<feature type="strand" evidence="7">
    <location>
        <begin position="408"/>
        <end position="414"/>
    </location>
</feature>
<feature type="strand" evidence="7">
    <location>
        <begin position="424"/>
        <end position="429"/>
    </location>
</feature>
<feature type="turn" evidence="7">
    <location>
        <begin position="430"/>
        <end position="433"/>
    </location>
</feature>
<feature type="strand" evidence="7">
    <location>
        <begin position="434"/>
        <end position="438"/>
    </location>
</feature>
<feature type="strand" evidence="7">
    <location>
        <begin position="445"/>
        <end position="451"/>
    </location>
</feature>
<feature type="strand" evidence="7">
    <location>
        <begin position="456"/>
        <end position="463"/>
    </location>
</feature>
<feature type="strand" evidence="7">
    <location>
        <begin position="465"/>
        <end position="474"/>
    </location>
</feature>
<feature type="turn" evidence="7">
    <location>
        <begin position="475"/>
        <end position="478"/>
    </location>
</feature>
<feature type="strand" evidence="7">
    <location>
        <begin position="479"/>
        <end position="487"/>
    </location>
</feature>
<feature type="strand" evidence="7">
    <location>
        <begin position="489"/>
        <end position="496"/>
    </location>
</feature>
<feature type="strand" evidence="7">
    <location>
        <begin position="502"/>
        <end position="507"/>
    </location>
</feature>
<feature type="strand" evidence="7">
    <location>
        <begin position="510"/>
        <end position="516"/>
    </location>
</feature>
<feature type="strand" evidence="7">
    <location>
        <begin position="524"/>
        <end position="528"/>
    </location>
</feature>
<feature type="strand" evidence="7">
    <location>
        <begin position="551"/>
        <end position="554"/>
    </location>
</feature>
<feature type="strand" evidence="7">
    <location>
        <begin position="561"/>
        <end position="564"/>
    </location>
</feature>
<feature type="strand" evidence="7">
    <location>
        <begin position="568"/>
        <end position="573"/>
    </location>
</feature>
<feature type="strand" evidence="7">
    <location>
        <begin position="577"/>
        <end position="579"/>
    </location>
</feature>
<feature type="strand" evidence="7">
    <location>
        <begin position="581"/>
        <end position="587"/>
    </location>
</feature>
<feature type="strand" evidence="7">
    <location>
        <begin position="592"/>
        <end position="597"/>
    </location>
</feature>
<feature type="strand" evidence="7">
    <location>
        <begin position="601"/>
        <end position="608"/>
    </location>
</feature>
<feature type="strand" evidence="7">
    <location>
        <begin position="613"/>
        <end position="617"/>
    </location>
</feature>
<feature type="strand" evidence="7">
    <location>
        <begin position="630"/>
        <end position="632"/>
    </location>
</feature>
<evidence type="ECO:0000269" key="1">
    <source>
    </source>
</evidence>
<evidence type="ECO:0000269" key="2">
    <source>
    </source>
</evidence>
<evidence type="ECO:0000269" key="3">
    <source>
    </source>
</evidence>
<evidence type="ECO:0000269" key="4">
    <source>
    </source>
</evidence>
<evidence type="ECO:0000269" key="5">
    <source>
    </source>
</evidence>
<evidence type="ECO:0000269" key="6">
    <source>
    </source>
</evidence>
<evidence type="ECO:0007829" key="7">
    <source>
        <dbReference type="PDB" id="4O9D"/>
    </source>
</evidence>
<accession>O74910</accession>
<name>RAF1_SCHPO</name>